<organism>
    <name type="scientific">Arabidopsis thaliana</name>
    <name type="common">Mouse-ear cress</name>
    <dbReference type="NCBI Taxonomy" id="3702"/>
    <lineage>
        <taxon>Eukaryota</taxon>
        <taxon>Viridiplantae</taxon>
        <taxon>Streptophyta</taxon>
        <taxon>Embryophyta</taxon>
        <taxon>Tracheophyta</taxon>
        <taxon>Spermatophyta</taxon>
        <taxon>Magnoliopsida</taxon>
        <taxon>eudicotyledons</taxon>
        <taxon>Gunneridae</taxon>
        <taxon>Pentapetalae</taxon>
        <taxon>rosids</taxon>
        <taxon>malvids</taxon>
        <taxon>Brassicales</taxon>
        <taxon>Brassicaceae</taxon>
        <taxon>Camelineae</taxon>
        <taxon>Arabidopsis</taxon>
    </lineage>
</organism>
<feature type="chain" id="PRO_0000196779" description="Uncharacterized mitochondrial protein AtMg00600">
    <location>
        <begin position="1"/>
        <end position="106"/>
    </location>
</feature>
<protein>
    <recommendedName>
        <fullName>Uncharacterized mitochondrial protein AtMg00600</fullName>
    </recommendedName>
    <alternativeName>
        <fullName>ORF106c</fullName>
    </alternativeName>
</protein>
<proteinExistence type="predicted"/>
<geneLocation type="mitochondrion"/>
<accession>P93315</accession>
<accession>Q1G3R1</accession>
<dbReference type="EMBL" id="Y08501">
    <property type="protein sequence ID" value="CAA69744.1"/>
    <property type="molecule type" value="Genomic_DNA"/>
</dbReference>
<dbReference type="EMBL" id="BK010421">
    <property type="status" value="NOT_ANNOTATED_CDS"/>
    <property type="molecule type" value="Genomic_DNA"/>
</dbReference>
<dbReference type="EMBL" id="AC007729">
    <property type="status" value="NOT_ANNOTATED_CDS"/>
    <property type="molecule type" value="Genomic_DNA"/>
</dbReference>
<dbReference type="EMBL" id="DQ487523">
    <property type="protein sequence ID" value="ABF59340.1"/>
    <property type="molecule type" value="Genomic_DNA"/>
</dbReference>
<dbReference type="EMBL" id="EF182951">
    <property type="status" value="NOT_ANNOTATED_CDS"/>
    <property type="molecule type" value="mRNA"/>
</dbReference>
<dbReference type="RefSeq" id="NP_085520.1">
    <property type="nucleotide sequence ID" value="NC_001284.2"/>
</dbReference>
<dbReference type="STRING" id="3702.P93315"/>
<dbReference type="PaxDb" id="3702-ATMG00600.1"/>
<dbReference type="EnsemblPlants" id="ATMG00600.1">
    <property type="protein sequence ID" value="ATMG00600.1"/>
    <property type="gene ID" value="ATMG00600"/>
</dbReference>
<dbReference type="Gramene" id="ATMG00600.1">
    <property type="protein sequence ID" value="ATMG00600.1"/>
    <property type="gene ID" value="ATMG00600"/>
</dbReference>
<dbReference type="Araport" id="ATMG00600"/>
<dbReference type="TAIR" id="ATMG00600">
    <property type="gene designation" value="ORF106C"/>
</dbReference>
<dbReference type="HOGENOM" id="CLU_2226868_0_0_1"/>
<dbReference type="InParanoid" id="P93315"/>
<dbReference type="PRO" id="PR:P93315"/>
<dbReference type="Proteomes" id="UP000006548">
    <property type="component" value="Mitochondrion MT"/>
</dbReference>
<dbReference type="ExpressionAtlas" id="P93315">
    <property type="expression patterns" value="baseline and differential"/>
</dbReference>
<dbReference type="GO" id="GO:0005739">
    <property type="term" value="C:mitochondrion"/>
    <property type="evidence" value="ECO:0007669"/>
    <property type="project" value="UniProtKB-SubCell"/>
</dbReference>
<evidence type="ECO:0000305" key="1"/>
<reference key="1">
    <citation type="journal article" date="1997" name="Nat. Genet.">
        <title>The mitochondrial genome of Arabidopsis thaliana contains 57 genes in 366,924 nucleotides.</title>
        <authorList>
            <person name="Unseld M."/>
            <person name="Marienfeld J.R."/>
            <person name="Brandt P."/>
            <person name="Brennicke A."/>
        </authorList>
    </citation>
    <scope>NUCLEOTIDE SEQUENCE [LARGE SCALE GENOMIC DNA]</scope>
    <source>
        <strain>cv. C24</strain>
    </source>
</reference>
<reference key="2">
    <citation type="journal article" date="2018" name="Plant Cell">
        <title>Correction of persistent errors in Arabidopsis reference mitochondrial genomes.</title>
        <authorList>
            <person name="Sloan D.B."/>
            <person name="Wu Z."/>
            <person name="Sharbrough J."/>
        </authorList>
    </citation>
    <scope>NUCLEOTIDE SEQUENCE [LARGE SCALE GENOMIC DNA]</scope>
    <source>
        <strain>cv. Columbia</strain>
    </source>
</reference>
<reference key="3">
    <citation type="journal article" date="1999" name="Nature">
        <title>Sequence and analysis of chromosome 2 of the plant Arabidopsis thaliana.</title>
        <authorList>
            <person name="Lin X."/>
            <person name="Kaul S."/>
            <person name="Rounsley S.D."/>
            <person name="Shea T.P."/>
            <person name="Benito M.-I."/>
            <person name="Town C.D."/>
            <person name="Fujii C.Y."/>
            <person name="Mason T.M."/>
            <person name="Bowman C.L."/>
            <person name="Barnstead M.E."/>
            <person name="Feldblyum T.V."/>
            <person name="Buell C.R."/>
            <person name="Ketchum K.A."/>
            <person name="Lee J.J."/>
            <person name="Ronning C.M."/>
            <person name="Koo H.L."/>
            <person name="Moffat K.S."/>
            <person name="Cronin L.A."/>
            <person name="Shen M."/>
            <person name="Pai G."/>
            <person name="Van Aken S."/>
            <person name="Umayam L."/>
            <person name="Tallon L.J."/>
            <person name="Gill J.E."/>
            <person name="Adams M.D."/>
            <person name="Carrera A.J."/>
            <person name="Creasy T.H."/>
            <person name="Goodman H.M."/>
            <person name="Somerville C.R."/>
            <person name="Copenhaver G.P."/>
            <person name="Preuss D."/>
            <person name="Nierman W.C."/>
            <person name="White O."/>
            <person name="Eisen J.A."/>
            <person name="Salzberg S.L."/>
            <person name="Fraser C.M."/>
            <person name="Venter J.C."/>
        </authorList>
    </citation>
    <scope>NUCLEOTIDE SEQUENCE [LARGE SCALE GENOMIC DNA]</scope>
    <source>
        <strain>cv. Columbia</strain>
    </source>
</reference>
<reference key="4">
    <citation type="journal article" date="2006" name="Plant Biotechnol. J.">
        <title>Simultaneous high-throughput recombinational cloning of open reading frames in closed and open configurations.</title>
        <authorList>
            <person name="Underwood B.A."/>
            <person name="Vanderhaeghen R."/>
            <person name="Whitford R."/>
            <person name="Town C.D."/>
            <person name="Hilson P."/>
        </authorList>
    </citation>
    <scope>NUCLEOTIDE SEQUENCE [LARGE SCALE GENOMIC DNA]</scope>
    <source>
        <strain>cv. Columbia</strain>
    </source>
</reference>
<reference key="5">
    <citation type="journal article" date="2007" name="BMC Genomics">
        <title>Experimental validation of novel genes predicted in the un-annotated regions of the Arabidopsis genome.</title>
        <authorList>
            <person name="Moskal W.A. Jr."/>
            <person name="Wu H.C."/>
            <person name="Underwood B.A."/>
            <person name="Wang W."/>
            <person name="Town C.D."/>
            <person name="Xiao Y.-L."/>
        </authorList>
    </citation>
    <scope>NUCLEOTIDE SEQUENCE [LARGE SCALE MRNA]</scope>
    <source>
        <strain>cv. Columbia</strain>
    </source>
</reference>
<name>M600_ARATH</name>
<gene>
    <name type="ordered locus">AtMg00600</name>
</gene>
<keyword id="KW-0496">Mitochondrion</keyword>
<keyword id="KW-1185">Reference proteome</keyword>
<sequence length="106" mass="11860">MTPCFINGKCAEQLTSTTAYKLLFLPPLTEHTTSLYPKQYPDKQLVLLLDPRSGTRLTYYSQPFFIALSSPYSGSSLSAKFHFAPHLYAFLVVASITRSDIAYSVN</sequence>
<comment type="subcellular location">
    <subcellularLocation>
        <location evidence="1">Mitochondrion</location>
    </subcellularLocation>
</comment>
<comment type="miscellaneous">
    <text>A stretch of 270 kb of the mitochondrial genome is duplicated within the centromere of chromosome 2 resulting in the duplication of the gene. The expression of the duplicated gene is demonstrated.</text>
</comment>